<dbReference type="EMBL" id="AY911372">
    <property type="protein sequence ID" value="AAW82136.1"/>
    <property type="molecule type" value="mRNA"/>
</dbReference>
<dbReference type="EMBL" id="BC151408">
    <property type="protein sequence ID" value="AAI51409.1"/>
    <property type="molecule type" value="mRNA"/>
</dbReference>
<dbReference type="EMBL" id="BC102789">
    <property type="protein sequence ID" value="AAI02790.1"/>
    <property type="molecule type" value="mRNA"/>
</dbReference>
<dbReference type="RefSeq" id="NP_001029210.1">
    <property type="nucleotide sequence ID" value="NM_001034038.1"/>
</dbReference>
<dbReference type="SMR" id="Q56JV9"/>
<dbReference type="FunCoup" id="Q56JV9">
    <property type="interactions" value="2368"/>
</dbReference>
<dbReference type="STRING" id="9913.ENSBTAP00000013079"/>
<dbReference type="PaxDb" id="9913-ENSBTAP00000013079"/>
<dbReference type="PeptideAtlas" id="Q56JV9"/>
<dbReference type="Ensembl" id="ENSBTAT00000013079.4">
    <property type="protein sequence ID" value="ENSBTAP00000013079.2"/>
    <property type="gene ID" value="ENSBTAG00000009908.7"/>
</dbReference>
<dbReference type="GeneID" id="282053"/>
<dbReference type="KEGG" id="bta:282053"/>
<dbReference type="CTD" id="6189"/>
<dbReference type="VEuPathDB" id="HostDB:ENSBTAG00000009908"/>
<dbReference type="VGNC" id="VGNC:55759">
    <property type="gene designation" value="RPS3A"/>
</dbReference>
<dbReference type="eggNOG" id="KOG1628">
    <property type="taxonomic scope" value="Eukaryota"/>
</dbReference>
<dbReference type="GeneTree" id="ENSGT00390000018433"/>
<dbReference type="HOGENOM" id="CLU_062507_0_1_1"/>
<dbReference type="InParanoid" id="Q56JV9"/>
<dbReference type="OMA" id="TRFKGHE"/>
<dbReference type="OrthoDB" id="9698045at2759"/>
<dbReference type="TreeFam" id="TF300037"/>
<dbReference type="Reactome" id="R-BTA-156827">
    <property type="pathway name" value="L13a-mediated translational silencing of Ceruloplasmin expression"/>
</dbReference>
<dbReference type="Reactome" id="R-BTA-1799339">
    <property type="pathway name" value="SRP-dependent cotranslational protein targeting to membrane"/>
</dbReference>
<dbReference type="Reactome" id="R-BTA-6791226">
    <property type="pathway name" value="Major pathway of rRNA processing in the nucleolus and cytosol"/>
</dbReference>
<dbReference type="Reactome" id="R-BTA-72649">
    <property type="pathway name" value="Translation initiation complex formation"/>
</dbReference>
<dbReference type="Reactome" id="R-BTA-72689">
    <property type="pathway name" value="Formation of a pool of free 40S subunits"/>
</dbReference>
<dbReference type="Reactome" id="R-BTA-72695">
    <property type="pathway name" value="Formation of the ternary complex, and subsequently, the 43S complex"/>
</dbReference>
<dbReference type="Reactome" id="R-BTA-72702">
    <property type="pathway name" value="Ribosomal scanning and start codon recognition"/>
</dbReference>
<dbReference type="Reactome" id="R-BTA-72706">
    <property type="pathway name" value="GTP hydrolysis and joining of the 60S ribosomal subunit"/>
</dbReference>
<dbReference type="Reactome" id="R-BTA-975956">
    <property type="pathway name" value="Nonsense Mediated Decay (NMD) independent of the Exon Junction Complex (EJC)"/>
</dbReference>
<dbReference type="Reactome" id="R-BTA-975957">
    <property type="pathway name" value="Nonsense Mediated Decay (NMD) enhanced by the Exon Junction Complex (EJC)"/>
</dbReference>
<dbReference type="CD-CODE" id="D7FE2080">
    <property type="entry name" value="Nucleolus"/>
</dbReference>
<dbReference type="Proteomes" id="UP000009136">
    <property type="component" value="Chromosome 17"/>
</dbReference>
<dbReference type="Bgee" id="ENSBTAG00000009908">
    <property type="expression patterns" value="Expressed in myometrium and 105 other cell types or tissues"/>
</dbReference>
<dbReference type="GO" id="GO:0005829">
    <property type="term" value="C:cytosol"/>
    <property type="evidence" value="ECO:0000318"/>
    <property type="project" value="GO_Central"/>
</dbReference>
<dbReference type="GO" id="GO:0022627">
    <property type="term" value="C:cytosolic small ribosomal subunit"/>
    <property type="evidence" value="ECO:0007669"/>
    <property type="project" value="UniProtKB-UniRule"/>
</dbReference>
<dbReference type="GO" id="GO:0005730">
    <property type="term" value="C:nucleolus"/>
    <property type="evidence" value="ECO:0007669"/>
    <property type="project" value="UniProtKB-SubCell"/>
</dbReference>
<dbReference type="GO" id="GO:1990904">
    <property type="term" value="C:ribonucleoprotein complex"/>
    <property type="evidence" value="ECO:0000250"/>
    <property type="project" value="UniProtKB"/>
</dbReference>
<dbReference type="GO" id="GO:0032040">
    <property type="term" value="C:small-subunit processome"/>
    <property type="evidence" value="ECO:0000250"/>
    <property type="project" value="UniProtKB"/>
</dbReference>
<dbReference type="GO" id="GO:0003735">
    <property type="term" value="F:structural constituent of ribosome"/>
    <property type="evidence" value="ECO:0007669"/>
    <property type="project" value="UniProtKB-UniRule"/>
</dbReference>
<dbReference type="GO" id="GO:0030154">
    <property type="term" value="P:cell differentiation"/>
    <property type="evidence" value="ECO:0007669"/>
    <property type="project" value="UniProtKB-KW"/>
</dbReference>
<dbReference type="GO" id="GO:0042274">
    <property type="term" value="P:ribosomal small subunit biogenesis"/>
    <property type="evidence" value="ECO:0000250"/>
    <property type="project" value="UniProtKB"/>
</dbReference>
<dbReference type="GO" id="GO:0006412">
    <property type="term" value="P:translation"/>
    <property type="evidence" value="ECO:0007669"/>
    <property type="project" value="UniProtKB-UniRule"/>
</dbReference>
<dbReference type="HAMAP" id="MF_03122">
    <property type="entry name" value="Ribosomal_eS1_euk"/>
    <property type="match status" value="1"/>
</dbReference>
<dbReference type="InterPro" id="IPR001593">
    <property type="entry name" value="Ribosomal_eS1"/>
</dbReference>
<dbReference type="InterPro" id="IPR018281">
    <property type="entry name" value="Ribosomal_eS1_CS"/>
</dbReference>
<dbReference type="InterPro" id="IPR027500">
    <property type="entry name" value="Ribosomal_eS1_euk"/>
</dbReference>
<dbReference type="PANTHER" id="PTHR11830">
    <property type="entry name" value="40S RIBOSOMAL PROTEIN S3A"/>
    <property type="match status" value="1"/>
</dbReference>
<dbReference type="Pfam" id="PF01015">
    <property type="entry name" value="Ribosomal_S3Ae"/>
    <property type="match status" value="1"/>
</dbReference>
<dbReference type="SMART" id="SM01397">
    <property type="entry name" value="Ribosomal_S3Ae"/>
    <property type="match status" value="1"/>
</dbReference>
<dbReference type="PROSITE" id="PS01191">
    <property type="entry name" value="RIBOSOMAL_S3AE"/>
    <property type="match status" value="1"/>
</dbReference>
<protein>
    <recommendedName>
        <fullName evidence="3">Small ribosomal subunit protein eS1</fullName>
    </recommendedName>
    <alternativeName>
        <fullName evidence="5">40S ribosomal protein S3a</fullName>
    </alternativeName>
</protein>
<organism>
    <name type="scientific">Bos taurus</name>
    <name type="common">Bovine</name>
    <dbReference type="NCBI Taxonomy" id="9913"/>
    <lineage>
        <taxon>Eukaryota</taxon>
        <taxon>Metazoa</taxon>
        <taxon>Chordata</taxon>
        <taxon>Craniata</taxon>
        <taxon>Vertebrata</taxon>
        <taxon>Euteleostomi</taxon>
        <taxon>Mammalia</taxon>
        <taxon>Eutheria</taxon>
        <taxon>Laurasiatheria</taxon>
        <taxon>Artiodactyla</taxon>
        <taxon>Ruminantia</taxon>
        <taxon>Pecora</taxon>
        <taxon>Bovidae</taxon>
        <taxon>Bovinae</taxon>
        <taxon>Bos</taxon>
    </lineage>
</organism>
<comment type="function">
    <text evidence="1 3">Component of the small ribosomal subunit. The ribosome is a large ribonucleoprotein complex responsible for the synthesis of proteins in the cell. Part of the small subunit (SSU) processome, first precursor of the small eukaryotic ribosomal subunit. During the assembly of the SSU processome in the nucleolus, many ribosome biogenesis factors, an RNA chaperone and ribosomal proteins associate with the nascent pre-rRNA and work in concert to generate RNA folding, modifications, rearrangements and cleavage as well as targeted degradation of pre-ribosomal RNA by the RNA exosome (By similarity). May play a role during erythropoiesis through regulation of transcription factor DDIT3 (By similarity).</text>
</comment>
<comment type="subunit">
    <text evidence="1">Component of the small ribosomal subunit. Mature ribosomes consist of a small (40S) and a large (60S) subunit. The 40S subunit contains about 33 different proteins and 1 molecule of RNA (18S). The 60S subunit contains about 49 different proteins and 3 molecules of RNA (28S, 5.8S and 5S). Identified in a IGF2BP1-dependent mRNP granule complex containing untranslated mRNAs. Binds with high affinity to IPO4. Interacts with DDIT3. Part of the small subunit (SSU) processome, composed of more than 70 proteins and the RNA chaperone small nucleolar RNA (snoRNA) U3.</text>
</comment>
<comment type="subcellular location">
    <subcellularLocation>
        <location evidence="2 3">Cytoplasm</location>
    </subcellularLocation>
    <subcellularLocation>
        <location evidence="2 3">Nucleus</location>
    </subcellularLocation>
    <subcellularLocation>
        <location evidence="1">Nucleus</location>
        <location evidence="1">Nucleolus</location>
    </subcellularLocation>
    <text evidence="2">Localized in cytoplasmic mRNP granules containing untranslated mRNAs.</text>
</comment>
<comment type="PTM">
    <text evidence="1">ADP-ribosylated at Tyr-155 by PARP1 in presence of HPF1.</text>
</comment>
<comment type="similarity">
    <text evidence="3">Belongs to the eukaryotic ribosomal protein eS1 family.</text>
</comment>
<accession>Q56JV9</accession>
<accession>A2V9E4</accession>
<accession>B0JYM2</accession>
<proteinExistence type="evidence at transcript level"/>
<keyword id="KW-0007">Acetylation</keyword>
<keyword id="KW-0013">ADP-ribosylation</keyword>
<keyword id="KW-0963">Cytoplasm</keyword>
<keyword id="KW-0221">Differentiation</keyword>
<keyword id="KW-1017">Isopeptide bond</keyword>
<keyword id="KW-0539">Nucleus</keyword>
<keyword id="KW-0597">Phosphoprotein</keyword>
<keyword id="KW-1185">Reference proteome</keyword>
<keyword id="KW-0687">Ribonucleoprotein</keyword>
<keyword id="KW-0689">Ribosomal protein</keyword>
<keyword id="KW-0832">Ubl conjugation</keyword>
<evidence type="ECO:0000250" key="1">
    <source>
        <dbReference type="UniProtKB" id="P61247"/>
    </source>
</evidence>
<evidence type="ECO:0000250" key="2">
    <source>
        <dbReference type="UniProtKB" id="P97351"/>
    </source>
</evidence>
<evidence type="ECO:0000255" key="3">
    <source>
        <dbReference type="HAMAP-Rule" id="MF_03122"/>
    </source>
</evidence>
<evidence type="ECO:0000256" key="4">
    <source>
        <dbReference type="SAM" id="MobiDB-lite"/>
    </source>
</evidence>
<evidence type="ECO:0000305" key="5"/>
<reference key="1">
    <citation type="submission" date="2005-01" db="EMBL/GenBank/DDBJ databases">
        <title>Analysis of sequences obtained from constructed full-length bovine cDNA libraries.</title>
        <authorList>
            <person name="Yu J."/>
            <person name="Meng Y."/>
            <person name="Wang Z."/>
            <person name="Hansen C."/>
            <person name="Li C."/>
            <person name="Moore S.S."/>
        </authorList>
    </citation>
    <scope>NUCLEOTIDE SEQUENCE [LARGE SCALE MRNA]</scope>
    <source>
        <tissue>Lymphoid epithelium</tissue>
    </source>
</reference>
<reference key="2">
    <citation type="submission" date="2005-08" db="EMBL/GenBank/DDBJ databases">
        <authorList>
            <consortium name="NIH - Mammalian Gene Collection (MGC) project"/>
        </authorList>
    </citation>
    <scope>NUCLEOTIDE SEQUENCE [LARGE SCALE MRNA]</scope>
    <source>
        <strain>Crossbred X Angus</strain>
        <tissue>Ileum</tissue>
    </source>
</reference>
<name>RS3A_BOVIN</name>
<sequence length="264" mass="29945">MAVGKNKRLTKGGKKGAKKKVVDPFSKKDWYDVKAPAMFNIRNIGKTLVTRTQGTKIASDGLKGRVFEVSLADLQNDEVAFRKFKLITEDVQGKNCLTNFHGMDLTRDKMCSMVKKWQTMIEAHVDVKTTDGYLLRLFCVGFTKKRNNQIRKTSYAQHQQVRQIRKKMMEIMTREVQTNDLKEVVNKLIPDSIGKDIEKACQSIYPLHDVFVRKVKMLKKPKFELGKLMELHGEGSSSGKATGDETGAKVERADGYEPPVQESV</sequence>
<feature type="chain" id="PRO_0000230763" description="Small ribosomal subunit protein eS1">
    <location>
        <begin position="1"/>
        <end position="264"/>
    </location>
</feature>
<feature type="region of interest" description="Disordered" evidence="4">
    <location>
        <begin position="232"/>
        <end position="264"/>
    </location>
</feature>
<feature type="compositionally biased region" description="Basic and acidic residues" evidence="4">
    <location>
        <begin position="242"/>
        <end position="255"/>
    </location>
</feature>
<feature type="modified residue" description="N6-acetyllysine; alternate" evidence="1">
    <location>
        <position position="34"/>
    </location>
</feature>
<feature type="modified residue" description="N6-acetyllysine" evidence="2">
    <location>
        <position position="56"/>
    </location>
</feature>
<feature type="modified residue" description="ADP-ribosyltyrosine" evidence="1">
    <location>
        <position position="155"/>
    </location>
</feature>
<feature type="modified residue" description="Phosphoserine" evidence="1">
    <location>
        <position position="236"/>
    </location>
</feature>
<feature type="modified residue" description="Phosphoserine" evidence="2">
    <location>
        <position position="237"/>
    </location>
</feature>
<feature type="modified residue" description="N6-acetyllysine; alternate" evidence="1">
    <location>
        <position position="249"/>
    </location>
</feature>
<feature type="modified residue" description="Phosphotyrosine" evidence="1">
    <location>
        <position position="256"/>
    </location>
</feature>
<feature type="modified residue" description="Phosphoserine" evidence="1">
    <location>
        <position position="263"/>
    </location>
</feature>
<feature type="cross-link" description="Glycyl lysine isopeptide (Lys-Gly) (interchain with G-Cter in SUMO2); alternate" evidence="1">
    <location>
        <position position="34"/>
    </location>
</feature>
<feature type="cross-link" description="Glycyl lysine isopeptide (Lys-Gly) (interchain with G-Cter in SUMO2); alternate" evidence="1">
    <location>
        <position position="249"/>
    </location>
</feature>
<gene>
    <name evidence="3" type="primary">RPS3A</name>
</gene>